<dbReference type="EC" id="3.2.1.122"/>
<dbReference type="EMBL" id="D50543">
    <property type="protein sequence ID" value="BAA09103.1"/>
    <property type="molecule type" value="Genomic_DNA"/>
</dbReference>
<dbReference type="EMBL" id="AL009126">
    <property type="protein sequence ID" value="CAB12647.1"/>
    <property type="molecule type" value="Genomic_DNA"/>
</dbReference>
<dbReference type="PIR" id="F69635">
    <property type="entry name" value="F69635"/>
</dbReference>
<dbReference type="RefSeq" id="NP_388699.1">
    <property type="nucleotide sequence ID" value="NC_000964.3"/>
</dbReference>
<dbReference type="RefSeq" id="WP_003244008.1">
    <property type="nucleotide sequence ID" value="NZ_OZ025638.1"/>
</dbReference>
<dbReference type="PDB" id="1U8X">
    <property type="method" value="X-ray"/>
    <property type="resolution" value="2.05 A"/>
    <property type="chains" value="X=1-449"/>
</dbReference>
<dbReference type="PDBsum" id="1U8X"/>
<dbReference type="SMR" id="P54716"/>
<dbReference type="FunCoup" id="P54716">
    <property type="interactions" value="52"/>
</dbReference>
<dbReference type="STRING" id="224308.BSU08180"/>
<dbReference type="DrugBank" id="DB02007">
    <property type="generic name" value="alpha-D-glucose 6-phosphate"/>
</dbReference>
<dbReference type="CAZy" id="GH4">
    <property type="family name" value="Glycoside Hydrolase Family 4"/>
</dbReference>
<dbReference type="PaxDb" id="224308-BSU08180"/>
<dbReference type="DNASU" id="936161"/>
<dbReference type="EnsemblBacteria" id="CAB12647">
    <property type="protein sequence ID" value="CAB12647"/>
    <property type="gene ID" value="BSU_08180"/>
</dbReference>
<dbReference type="GeneID" id="936161"/>
<dbReference type="KEGG" id="bsu:BSU08180"/>
<dbReference type="PATRIC" id="fig|224308.179.peg.884"/>
<dbReference type="eggNOG" id="COG1486">
    <property type="taxonomic scope" value="Bacteria"/>
</dbReference>
<dbReference type="InParanoid" id="P54716"/>
<dbReference type="OrthoDB" id="9808275at2"/>
<dbReference type="PhylomeDB" id="P54716"/>
<dbReference type="BioCyc" id="BSUB:BSU08180-MONOMER"/>
<dbReference type="BioCyc" id="MetaCyc:BSU08180-MONOMER"/>
<dbReference type="BRENDA" id="3.2.1.122">
    <property type="organism ID" value="658"/>
</dbReference>
<dbReference type="SABIO-RK" id="P54716"/>
<dbReference type="EvolutionaryTrace" id="P54716"/>
<dbReference type="Proteomes" id="UP000001570">
    <property type="component" value="Chromosome"/>
</dbReference>
<dbReference type="GO" id="GO:0005829">
    <property type="term" value="C:cytosol"/>
    <property type="evidence" value="ECO:0000318"/>
    <property type="project" value="GO_Central"/>
</dbReference>
<dbReference type="GO" id="GO:0004553">
    <property type="term" value="F:hydrolase activity, hydrolyzing O-glycosyl compounds"/>
    <property type="evidence" value="ECO:0000318"/>
    <property type="project" value="GO_Central"/>
</dbReference>
<dbReference type="GO" id="GO:0050081">
    <property type="term" value="F:maltose-6'-phosphate glucosidase activity"/>
    <property type="evidence" value="ECO:0007669"/>
    <property type="project" value="UniProtKB-EC"/>
</dbReference>
<dbReference type="GO" id="GO:0046872">
    <property type="term" value="F:metal ion binding"/>
    <property type="evidence" value="ECO:0007669"/>
    <property type="project" value="UniProtKB-KW"/>
</dbReference>
<dbReference type="GO" id="GO:0016616">
    <property type="term" value="F:oxidoreductase activity, acting on the CH-OH group of donors, NAD or NADP as acceptor"/>
    <property type="evidence" value="ECO:0007669"/>
    <property type="project" value="InterPro"/>
</dbReference>
<dbReference type="GO" id="GO:0005975">
    <property type="term" value="P:carbohydrate metabolic process"/>
    <property type="evidence" value="ECO:0007669"/>
    <property type="project" value="InterPro"/>
</dbReference>
<dbReference type="CDD" id="cd05298">
    <property type="entry name" value="GH4_GlvA_pagL_like"/>
    <property type="match status" value="1"/>
</dbReference>
<dbReference type="Gene3D" id="3.90.110.10">
    <property type="entry name" value="Lactate dehydrogenase/glycoside hydrolase, family 4, C-terminal"/>
    <property type="match status" value="1"/>
</dbReference>
<dbReference type="Gene3D" id="3.40.50.720">
    <property type="entry name" value="NAD(P)-binding Rossmann-like Domain"/>
    <property type="match status" value="1"/>
</dbReference>
<dbReference type="InterPro" id="IPR019802">
    <property type="entry name" value="GlycHydrolase_4_CS"/>
</dbReference>
<dbReference type="InterPro" id="IPR001088">
    <property type="entry name" value="Glyco_hydro_4"/>
</dbReference>
<dbReference type="InterPro" id="IPR022616">
    <property type="entry name" value="Glyco_hydro_4_C"/>
</dbReference>
<dbReference type="InterPro" id="IPR015955">
    <property type="entry name" value="Lactate_DH/Glyco_Ohase_4_C"/>
</dbReference>
<dbReference type="InterPro" id="IPR036291">
    <property type="entry name" value="NAD(P)-bd_dom_sf"/>
</dbReference>
<dbReference type="PANTHER" id="PTHR32092">
    <property type="entry name" value="6-PHOSPHO-BETA-GLUCOSIDASE-RELATED"/>
    <property type="match status" value="1"/>
</dbReference>
<dbReference type="PANTHER" id="PTHR32092:SF14">
    <property type="entry name" value="MALTOSE-6'-PHOSPHATE GLUCOSIDASE"/>
    <property type="match status" value="1"/>
</dbReference>
<dbReference type="Pfam" id="PF02056">
    <property type="entry name" value="Glyco_hydro_4"/>
    <property type="match status" value="1"/>
</dbReference>
<dbReference type="Pfam" id="PF11975">
    <property type="entry name" value="Glyco_hydro_4C"/>
    <property type="match status" value="1"/>
</dbReference>
<dbReference type="PRINTS" id="PR00732">
    <property type="entry name" value="GLHYDRLASE4"/>
</dbReference>
<dbReference type="SUPFAM" id="SSF56327">
    <property type="entry name" value="LDH C-terminal domain-like"/>
    <property type="match status" value="1"/>
</dbReference>
<dbReference type="SUPFAM" id="SSF51735">
    <property type="entry name" value="NAD(P)-binding Rossmann-fold domains"/>
    <property type="match status" value="1"/>
</dbReference>
<dbReference type="PROSITE" id="PS01324">
    <property type="entry name" value="GLYCOSYL_HYDROL_F4"/>
    <property type="match status" value="1"/>
</dbReference>
<feature type="chain" id="PRO_0000169859" description="Maltose-6'-phosphate glucosidase">
    <location>
        <begin position="1"/>
        <end position="449"/>
    </location>
</feature>
<feature type="active site" description="Proton donor">
    <location>
        <position position="172"/>
    </location>
</feature>
<feature type="active site" description="Proton acceptor">
    <location>
        <position position="265"/>
    </location>
</feature>
<feature type="binding site">
    <location>
        <begin position="6"/>
        <end position="72"/>
    </location>
    <ligand>
        <name>NAD(+)</name>
        <dbReference type="ChEBI" id="CHEBI:57540"/>
    </ligand>
</feature>
<feature type="binding site">
    <location>
        <position position="95"/>
    </location>
    <ligand>
        <name>substrate</name>
    </ligand>
</feature>
<feature type="binding site">
    <location>
        <position position="149"/>
    </location>
    <ligand>
        <name>substrate</name>
    </ligand>
</feature>
<feature type="binding site">
    <location>
        <position position="171"/>
    </location>
    <ligand>
        <name>Mn(2+)</name>
        <dbReference type="ChEBI" id="CHEBI:29035"/>
    </ligand>
</feature>
<feature type="binding site">
    <location>
        <position position="202"/>
    </location>
    <ligand>
        <name>Mn(2+)</name>
        <dbReference type="ChEBI" id="CHEBI:29035"/>
    </ligand>
</feature>
<feature type="binding site">
    <location>
        <position position="285"/>
    </location>
    <ligand>
        <name>substrate</name>
    </ligand>
</feature>
<feature type="site" description="Increases basicity of active site Tyr">
    <location>
        <position position="111"/>
    </location>
</feature>
<feature type="mutagenesis site" description="Loss of activity." evidence="3">
    <original>D</original>
    <variation>E</variation>
    <variation>G</variation>
    <location>
        <position position="41"/>
    </location>
</feature>
<feature type="mutagenesis site" description="Loss of activity." evidence="3">
    <original>E</original>
    <variation>D</variation>
    <variation>G</variation>
    <location>
        <position position="111"/>
    </location>
</feature>
<feature type="mutagenesis site" description="Loss of activity." evidence="3">
    <original>E</original>
    <variation>D</variation>
    <variation>G</variation>
    <location>
        <position position="359"/>
    </location>
</feature>
<feature type="strand" evidence="5">
    <location>
        <begin position="6"/>
        <end position="11"/>
    </location>
</feature>
<feature type="strand" evidence="5">
    <location>
        <begin position="15"/>
        <end position="17"/>
    </location>
</feature>
<feature type="helix" evidence="5">
    <location>
        <begin position="18"/>
        <end position="27"/>
    </location>
</feature>
<feature type="turn" evidence="5">
    <location>
        <begin position="28"/>
        <end position="31"/>
    </location>
</feature>
<feature type="strand" evidence="5">
    <location>
        <begin position="34"/>
        <end position="40"/>
    </location>
</feature>
<feature type="helix" evidence="5">
    <location>
        <begin position="44"/>
        <end position="61"/>
    </location>
</feature>
<feature type="strand" evidence="5">
    <location>
        <begin position="65"/>
        <end position="71"/>
    </location>
</feature>
<feature type="helix" evidence="5">
    <location>
        <begin position="73"/>
        <end position="77"/>
    </location>
</feature>
<feature type="strand" evidence="5">
    <location>
        <begin position="81"/>
        <end position="85"/>
    </location>
</feature>
<feature type="helix" evidence="5">
    <location>
        <begin position="91"/>
        <end position="103"/>
    </location>
</feature>
<feature type="turn" evidence="5">
    <location>
        <begin position="104"/>
        <end position="106"/>
    </location>
</feature>
<feature type="strand" evidence="5">
    <location>
        <begin position="111"/>
        <end position="113"/>
    </location>
</feature>
<feature type="helix" evidence="5">
    <location>
        <begin position="114"/>
        <end position="138"/>
    </location>
</feature>
<feature type="strand" evidence="5">
    <location>
        <begin position="143"/>
        <end position="146"/>
    </location>
</feature>
<feature type="helix" evidence="5">
    <location>
        <begin position="151"/>
        <end position="161"/>
    </location>
</feature>
<feature type="strand" evidence="5">
    <location>
        <begin position="167"/>
        <end position="169"/>
    </location>
</feature>
<feature type="helix" evidence="5">
    <location>
        <begin position="173"/>
        <end position="185"/>
    </location>
</feature>
<feature type="helix" evidence="5">
    <location>
        <begin position="190"/>
        <end position="192"/>
    </location>
</feature>
<feature type="strand" evidence="5">
    <location>
        <begin position="193"/>
        <end position="200"/>
    </location>
</feature>
<feature type="strand" evidence="5">
    <location>
        <begin position="203"/>
        <end position="211"/>
    </location>
</feature>
<feature type="helix" evidence="5">
    <location>
        <begin position="218"/>
        <end position="228"/>
    </location>
</feature>
<feature type="helix" evidence="5">
    <location>
        <begin position="246"/>
        <end position="255"/>
    </location>
</feature>
<feature type="strand" evidence="5">
    <location>
        <begin position="260"/>
        <end position="262"/>
    </location>
</feature>
<feature type="helix" evidence="5">
    <location>
        <begin position="264"/>
        <end position="266"/>
    </location>
</feature>
<feature type="helix" evidence="5">
    <location>
        <begin position="267"/>
        <end position="270"/>
    </location>
</feature>
<feature type="helix" evidence="5">
    <location>
        <begin position="272"/>
        <end position="276"/>
    </location>
</feature>
<feature type="strand" evidence="5">
    <location>
        <begin position="281"/>
        <end position="283"/>
    </location>
</feature>
<feature type="helix" evidence="5">
    <location>
        <begin position="285"/>
        <end position="292"/>
    </location>
</feature>
<feature type="turn" evidence="5">
    <location>
        <begin position="293"/>
        <end position="300"/>
    </location>
</feature>
<feature type="helix" evidence="5">
    <location>
        <begin position="301"/>
        <end position="307"/>
    </location>
</feature>
<feature type="turn" evidence="5">
    <location>
        <begin position="319"/>
        <end position="321"/>
    </location>
</feature>
<feature type="helix" evidence="5">
    <location>
        <begin position="322"/>
        <end position="333"/>
    </location>
</feature>
<feature type="strand" evidence="5">
    <location>
        <begin position="337"/>
        <end position="344"/>
    </location>
</feature>
<feature type="strand" evidence="5">
    <location>
        <begin position="356"/>
        <end position="365"/>
    </location>
</feature>
<feature type="strand" evidence="5">
    <location>
        <begin position="368"/>
        <end position="371"/>
    </location>
</feature>
<feature type="helix" evidence="5">
    <location>
        <begin position="379"/>
        <end position="401"/>
    </location>
</feature>
<feature type="helix" evidence="5">
    <location>
        <begin position="404"/>
        <end position="413"/>
    </location>
</feature>
<feature type="helix" evidence="5">
    <location>
        <begin position="420"/>
        <end position="433"/>
    </location>
</feature>
<feature type="turn" evidence="5">
    <location>
        <begin position="434"/>
        <end position="437"/>
    </location>
</feature>
<gene>
    <name type="primary">glvA</name>
    <name type="synonym">glv-1</name>
    <name type="synonym">glvG</name>
    <name type="synonym">malA</name>
    <name type="ordered locus">BSU08180</name>
</gene>
<name>GLVA_BACSU</name>
<sequence length="449" mass="50514">MKKKSFSIVIAGGGSTFTPGIVLMLLDHLEEFPIRKLKLYDNDKERQDRIAGACDVFIREKAPDIEFAATTDPEEAFTDVDFVMAHIRVGKYAMRALDEQIPLKYGVVGQETCGPGGIAYGMRSIGGVLEILDYMEKYSPDAWMLNYSNPAAIVAEATRRLRPNSKILNICDMPVGIEDRMAQILGLSSRKEMKVRYYGLNHFGWWTSIQDQEGNDLMPKLKEHVSQYGYIPKTEAEAVEASWNDTFAKARDVQAADPDTLPNTYLQYYLFPDDMVKKSNPNHTRANEVMEGREAFIFSQCDMITREQSSENSEIKIDDHASYIVDLARAIAYNTGERMLLIVENNGAIANFDPTAMVEVPCIVGSNGPEPITVGTIPQFQKGLMEQQVSVEKLTVEAWAEKSFQKLWQALILSKTVPNARVARLILEDLVEANKDFWPELDQSPTRIS</sequence>
<comment type="function">
    <text>Hydrolyzes maltose-6'-phosphate and trehalose-6'-phosphate. Is involved in the catabolism of alpha-glycosides accumulated via a phosphoenolpyruvate-dependent maltose phosphotransferase system (PEP-PTS). Is also able to significantly catalyze the hydrolysis of both 6-phospho-alpha- and 6-phospho-beta-glucosides containing activated leaving groups such as p-nitrophenol and does so with retention and inversion, respectively, of the substrate anomeric configuration.</text>
</comment>
<comment type="catalytic activity">
    <reaction>
        <text>alpha-maltose 6'-phosphate + H2O = D-glucose 6-phosphate + D-glucose</text>
        <dbReference type="Rhea" id="RHEA:20421"/>
        <dbReference type="ChEBI" id="CHEBI:4167"/>
        <dbReference type="ChEBI" id="CHEBI:15377"/>
        <dbReference type="ChEBI" id="CHEBI:57478"/>
        <dbReference type="ChEBI" id="CHEBI:61548"/>
        <dbReference type="EC" id="3.2.1.122"/>
    </reaction>
</comment>
<comment type="cofactor">
    <cofactor evidence="2">
        <name>Mn(2+)</name>
        <dbReference type="ChEBI" id="CHEBI:29035"/>
    </cofactor>
    <cofactor evidence="2">
        <name>Fe(2+)</name>
        <dbReference type="ChEBI" id="CHEBI:29033"/>
    </cofactor>
    <cofactor evidence="2">
        <name>Co(2+)</name>
        <dbReference type="ChEBI" id="CHEBI:48828"/>
    </cofactor>
    <cofactor evidence="2">
        <name>Ni(2+)</name>
        <dbReference type="ChEBI" id="CHEBI:49786"/>
    </cofactor>
    <text evidence="2">Binds 1 divalent metal cation per subunit. Manganese, iron, cobalt or nickel enhance activity.</text>
</comment>
<comment type="cofactor">
    <cofactor evidence="2">
        <name>NAD(+)</name>
        <dbReference type="ChEBI" id="CHEBI:57540"/>
    </cofactor>
    <text evidence="2">Binds 1 NAD(+) per subunit. Is only active with NAD(+), not NADH.</text>
</comment>
<comment type="activity regulation">
    <text evidence="2">Cellobiose-6'-phosphate and 6-phospho-beta-D-glucopyranoside are not substrates but competitive inhibitors of GlvA.</text>
</comment>
<comment type="biophysicochemical properties">
    <kinetics>
        <KM evidence="2">400 uM for maltose-6'-phosphate (at pH 7.5 and 37 degrees Celsius)</KM>
        <KM evidence="2">360 uM for maltose-6'-phosphate (at pH 8.4 and 37 degrees Celsius)</KM>
        <KM evidence="2">610 uM for methyl 6-phospho-alpha-D-glucoside (at pH 7.5 and 37 degrees Celsius)</KM>
        <KM evidence="2">69 uM for phenyl 6-phospho-alpha-D-glucoside (at pH 7.5 and 37 degrees Celsius)</KM>
        <KM evidence="2">52 uM for 4-nitrophenyl 6-phospho-alpha-D-glucoside (at pH 7.5 and 37 degrees Celsius)</KM>
        <KM evidence="2">12 uM for 3,4-dinitrophenyl 6-phospho-alpha-D-glucoside (at pH 7.5 and 37 degrees Celsius)</KM>
        <KM evidence="2">2.9 uM for 3,4-dinitrophenyl 6-phospho-beta-D-glucoside (at pH 7.5 and 37 degrees Celsius)</KM>
        <KM evidence="2">27 uM for 3,5-dichlorophenyl 6-phospho-beta-D-glucoside (at pH 7.5 and 37 degrees Celsius)</KM>
        <KM evidence="2">34 uM for 3-nitrophenyl 6-phospho-beta-D-glucoside (at pH 7.5 and 37 degrees Celsius)</KM>
    </kinetics>
    <phDependence>
        <text evidence="2">Optimum pH is about 7.6-8.4. Stable from pH 4.0 to 10.0.</text>
    </phDependence>
</comment>
<comment type="subunit">
    <text>Homotetramer.</text>
</comment>
<comment type="induction">
    <text evidence="1">By maltose; repressed by glucose.</text>
</comment>
<comment type="mass spectrometry" mass="50510.0" method="Electrospray" evidence="3"/>
<comment type="miscellaneous">
    <text>Reaction proceeds via a redox-elimination-addition mechanism consistent with an E1cb-type mechanism. This includes redox steps involving NAD(+) and stabilization of intermediates by Mn(2+).</text>
</comment>
<comment type="miscellaneous">
    <text>Because it hydrolyzes 6-phospho-alpha-glucopyranosides without activated leaving groups (such as maltose-6'-phosphate) but not glycosidic linkage of naturally occurring phospho-beta-glucosides such as cellobiose-6'-phosphate nor methyl 6-phospho-beta-D-glucopyranoside, GlvA is certainly more appropriately classified as a 6-phospho-alpha-glucosidase than as a 6-phospho-beta-glucosidase. The ability to hydrolyze beta-glycosidic linkages is exceptional and applies only to activated 6-phospho-beta-D-glucopyranosides.</text>
</comment>
<comment type="similarity">
    <text evidence="4">Belongs to the glycosyl hydrolase 4 family.</text>
</comment>
<protein>
    <recommendedName>
        <fullName>Maltose-6'-phosphate glucosidase</fullName>
        <ecNumber>3.2.1.122</ecNumber>
    </recommendedName>
    <alternativeName>
        <fullName>6-phospho-alpha-D-glucosidase</fullName>
    </alternativeName>
    <alternativeName>
        <fullName>6-phosphoryl-O-alpha-D-glucopyranosyl:phosphoglucohydrolase</fullName>
    </alternativeName>
</protein>
<proteinExistence type="evidence at protein level"/>
<keyword id="KW-0002">3D-structure</keyword>
<keyword id="KW-0119">Carbohydrate metabolism</keyword>
<keyword id="KW-0170">Cobalt</keyword>
<keyword id="KW-0903">Direct protein sequencing</keyword>
<keyword id="KW-0326">Glycosidase</keyword>
<keyword id="KW-0378">Hydrolase</keyword>
<keyword id="KW-0408">Iron</keyword>
<keyword id="KW-0464">Manganese</keyword>
<keyword id="KW-0479">Metal-binding</keyword>
<keyword id="KW-0520">NAD</keyword>
<keyword id="KW-0533">Nickel</keyword>
<keyword id="KW-1185">Reference proteome</keyword>
<organism>
    <name type="scientific">Bacillus subtilis (strain 168)</name>
    <dbReference type="NCBI Taxonomy" id="224308"/>
    <lineage>
        <taxon>Bacteria</taxon>
        <taxon>Bacillati</taxon>
        <taxon>Bacillota</taxon>
        <taxon>Bacilli</taxon>
        <taxon>Bacillales</taxon>
        <taxon>Bacillaceae</taxon>
        <taxon>Bacillus</taxon>
    </lineage>
</organism>
<accession>P54716</accession>
<evidence type="ECO:0000269" key="1">
    <source>
    </source>
</evidence>
<evidence type="ECO:0000269" key="2">
    <source>
    </source>
</evidence>
<evidence type="ECO:0000269" key="3">
    <source>
    </source>
</evidence>
<evidence type="ECO:0000305" key="4"/>
<evidence type="ECO:0007829" key="5">
    <source>
        <dbReference type="PDB" id="1U8X"/>
    </source>
</evidence>
<reference key="1">
    <citation type="journal article" date="1996" name="Microbiology">
        <title>Determination of a 12 kb nucleotide sequence around the 76 degrees region of the Bacillus subtilis chromosome.</title>
        <authorList>
            <person name="Yamamoto H."/>
            <person name="Uchiyama S."/>
            <person name="Fajar A.N."/>
            <person name="Ogasawara N."/>
            <person name="Sekiguchi J."/>
        </authorList>
    </citation>
    <scope>NUCLEOTIDE SEQUENCE [GENOMIC DNA]</scope>
    <source>
        <strain>168</strain>
    </source>
</reference>
<reference key="2">
    <citation type="journal article" date="1997" name="Nature">
        <title>The complete genome sequence of the Gram-positive bacterium Bacillus subtilis.</title>
        <authorList>
            <person name="Kunst F."/>
            <person name="Ogasawara N."/>
            <person name="Moszer I."/>
            <person name="Albertini A.M."/>
            <person name="Alloni G."/>
            <person name="Azevedo V."/>
            <person name="Bertero M.G."/>
            <person name="Bessieres P."/>
            <person name="Bolotin A."/>
            <person name="Borchert S."/>
            <person name="Borriss R."/>
            <person name="Boursier L."/>
            <person name="Brans A."/>
            <person name="Braun M."/>
            <person name="Brignell S.C."/>
            <person name="Bron S."/>
            <person name="Brouillet S."/>
            <person name="Bruschi C.V."/>
            <person name="Caldwell B."/>
            <person name="Capuano V."/>
            <person name="Carter N.M."/>
            <person name="Choi S.-K."/>
            <person name="Codani J.-J."/>
            <person name="Connerton I.F."/>
            <person name="Cummings N.J."/>
            <person name="Daniel R.A."/>
            <person name="Denizot F."/>
            <person name="Devine K.M."/>
            <person name="Duesterhoeft A."/>
            <person name="Ehrlich S.D."/>
            <person name="Emmerson P.T."/>
            <person name="Entian K.-D."/>
            <person name="Errington J."/>
            <person name="Fabret C."/>
            <person name="Ferrari E."/>
            <person name="Foulger D."/>
            <person name="Fritz C."/>
            <person name="Fujita M."/>
            <person name="Fujita Y."/>
            <person name="Fuma S."/>
            <person name="Galizzi A."/>
            <person name="Galleron N."/>
            <person name="Ghim S.-Y."/>
            <person name="Glaser P."/>
            <person name="Goffeau A."/>
            <person name="Golightly E.J."/>
            <person name="Grandi G."/>
            <person name="Guiseppi G."/>
            <person name="Guy B.J."/>
            <person name="Haga K."/>
            <person name="Haiech J."/>
            <person name="Harwood C.R."/>
            <person name="Henaut A."/>
            <person name="Hilbert H."/>
            <person name="Holsappel S."/>
            <person name="Hosono S."/>
            <person name="Hullo M.-F."/>
            <person name="Itaya M."/>
            <person name="Jones L.-M."/>
            <person name="Joris B."/>
            <person name="Karamata D."/>
            <person name="Kasahara Y."/>
            <person name="Klaerr-Blanchard M."/>
            <person name="Klein C."/>
            <person name="Kobayashi Y."/>
            <person name="Koetter P."/>
            <person name="Koningstein G."/>
            <person name="Krogh S."/>
            <person name="Kumano M."/>
            <person name="Kurita K."/>
            <person name="Lapidus A."/>
            <person name="Lardinois S."/>
            <person name="Lauber J."/>
            <person name="Lazarevic V."/>
            <person name="Lee S.-M."/>
            <person name="Levine A."/>
            <person name="Liu H."/>
            <person name="Masuda S."/>
            <person name="Mauel C."/>
            <person name="Medigue C."/>
            <person name="Medina N."/>
            <person name="Mellado R.P."/>
            <person name="Mizuno M."/>
            <person name="Moestl D."/>
            <person name="Nakai S."/>
            <person name="Noback M."/>
            <person name="Noone D."/>
            <person name="O'Reilly M."/>
            <person name="Ogawa K."/>
            <person name="Ogiwara A."/>
            <person name="Oudega B."/>
            <person name="Park S.-H."/>
            <person name="Parro V."/>
            <person name="Pohl T.M."/>
            <person name="Portetelle D."/>
            <person name="Porwollik S."/>
            <person name="Prescott A.M."/>
            <person name="Presecan E."/>
            <person name="Pujic P."/>
            <person name="Purnelle B."/>
            <person name="Rapoport G."/>
            <person name="Rey M."/>
            <person name="Reynolds S."/>
            <person name="Rieger M."/>
            <person name="Rivolta C."/>
            <person name="Rocha E."/>
            <person name="Roche B."/>
            <person name="Rose M."/>
            <person name="Sadaie Y."/>
            <person name="Sato T."/>
            <person name="Scanlan E."/>
            <person name="Schleich S."/>
            <person name="Schroeter R."/>
            <person name="Scoffone F."/>
            <person name="Sekiguchi J."/>
            <person name="Sekowska A."/>
            <person name="Seror S.J."/>
            <person name="Serror P."/>
            <person name="Shin B.-S."/>
            <person name="Soldo B."/>
            <person name="Sorokin A."/>
            <person name="Tacconi E."/>
            <person name="Takagi T."/>
            <person name="Takahashi H."/>
            <person name="Takemaru K."/>
            <person name="Takeuchi M."/>
            <person name="Tamakoshi A."/>
            <person name="Tanaka T."/>
            <person name="Terpstra P."/>
            <person name="Tognoni A."/>
            <person name="Tosato V."/>
            <person name="Uchiyama S."/>
            <person name="Vandenbol M."/>
            <person name="Vannier F."/>
            <person name="Vassarotti A."/>
            <person name="Viari A."/>
            <person name="Wambutt R."/>
            <person name="Wedler E."/>
            <person name="Wedler H."/>
            <person name="Weitzenegger T."/>
            <person name="Winters P."/>
            <person name="Wipat A."/>
            <person name="Yamamoto H."/>
            <person name="Yamane K."/>
            <person name="Yasumoto K."/>
            <person name="Yata K."/>
            <person name="Yoshida K."/>
            <person name="Yoshikawa H.-F."/>
            <person name="Zumstein E."/>
            <person name="Yoshikawa H."/>
            <person name="Danchin A."/>
        </authorList>
    </citation>
    <scope>NUCLEOTIDE SEQUENCE [LARGE SCALE GENOMIC DNA]</scope>
    <source>
        <strain>168</strain>
    </source>
</reference>
<reference key="3">
    <citation type="journal article" date="1998" name="J. Biol. Chem.">
        <title>The gene glvA of Bacillus subtilis 168 encodes a metal-requiring, NAD(H)-dependent 6-phospho-alpha-glucosidase. Assignment to family 4 of the glycosylhydrolase superfamily.</title>
        <authorList>
            <person name="Thompson J."/>
            <person name="Pikis A."/>
            <person name="Ruvinov S.B."/>
            <person name="Henrissat B."/>
            <person name="Yamamoto H."/>
            <person name="Sekiguchi J."/>
        </authorList>
    </citation>
    <scope>PROTEIN SEQUENCE OF 1-37</scope>
    <scope>CHARACTERIZATION</scope>
    <scope>MASS SPECTROMETRY</scope>
    <scope>MUTAGENESIS</scope>
</reference>
<reference key="4">
    <citation type="journal article" date="2001" name="J. Bacteriol.">
        <title>Regulation of the glv operon in Bacillus subtilis: YfiA (GlvR) is a positive regulator of the operon that is repressed through CcpA and cre.</title>
        <authorList>
            <person name="Yamamoto H."/>
            <person name="Serizawa M."/>
            <person name="Thompson J."/>
            <person name="Sekiguchi J."/>
        </authorList>
    </citation>
    <scope>INDUCTION</scope>
</reference>
<reference key="5">
    <citation type="journal article" date="1999" name="Acta Crystallogr. D">
        <title>Crystallization and preliminary X-ray analysis of the 6-phospho-alpha-glucosidase from Bacillus subtilis.</title>
        <authorList>
            <person name="Varrot A."/>
            <person name="Yamamoto H."/>
            <person name="Sekiguchi J."/>
            <person name="Thompson J."/>
            <person name="Davies G.J."/>
        </authorList>
    </citation>
    <scope>CRYSTALLIZATION</scope>
</reference>
<reference key="6">
    <citation type="journal article" date="2007" name="Biochemistry">
        <title>Mechanism of GlvA from Bacillus subtilis: a detailed kinetic analysis of a 6-phospho-alpha-glucosidase from glycoside hydrolase family 4.</title>
        <authorList>
            <person name="Yip V.L.Y."/>
            <person name="Thompson J."/>
            <person name="Withers S.G."/>
        </authorList>
    </citation>
    <scope>REACTION MECHANISM</scope>
    <scope>CHARACTERIZATION</scope>
    <scope>COFACTOR</scope>
    <scope>SUBSTRATE SPECIFICITY</scope>
    <scope>ACTIVITY REGULATION</scope>
    <scope>BIOPHYSICOCHEMICAL PROPERTIES</scope>
</reference>
<reference key="7">
    <citation type="journal article" date="2004" name="Structure">
        <title>Novel catalytic mechanism of glycoside hydrolysis based on the structure of an NAD+/Mn2+ -dependent phospho-alpha-glucosidase from Bacillus subtilis.</title>
        <authorList>
            <person name="Rajan S.S."/>
            <person name="Yang X."/>
            <person name="Collart F."/>
            <person name="Yip V.L.Y."/>
            <person name="Withers S.G."/>
            <person name="Varrot A."/>
            <person name="Thompson J."/>
            <person name="Davies G.J."/>
            <person name="Anderson W.F."/>
        </authorList>
    </citation>
    <scope>X-RAY CRYSTALLOGRAPHY (2.05 ANGSTROMS) OF COMPLEX WITH NAD(H) AND ALPHA-D-GLUCOSE-6-PHOSPHATE</scope>
    <scope>REACTION MECHANISM</scope>
</reference>